<reference key="1">
    <citation type="journal article" date="2015" name="Genome Announc.">
        <title>Complete genome sequence of Anaeromyxobacter sp. Fw109-5, an anaerobic, metal-reducing bacterium isolated from a contaminated subsurface environment.</title>
        <authorList>
            <person name="Hwang C."/>
            <person name="Copeland A."/>
            <person name="Lucas S."/>
            <person name="Lapidus A."/>
            <person name="Barry K."/>
            <person name="Glavina Del Rio T."/>
            <person name="Dalin E."/>
            <person name="Tice H."/>
            <person name="Pitluck S."/>
            <person name="Sims D."/>
            <person name="Brettin T."/>
            <person name="Bruce D.C."/>
            <person name="Detter J.C."/>
            <person name="Han C.S."/>
            <person name="Schmutz J."/>
            <person name="Larimer F.W."/>
            <person name="Land M.L."/>
            <person name="Hauser L.J."/>
            <person name="Kyrpides N."/>
            <person name="Lykidis A."/>
            <person name="Richardson P."/>
            <person name="Belieav A."/>
            <person name="Sanford R.A."/>
            <person name="Loeffler F.E."/>
            <person name="Fields M.W."/>
        </authorList>
    </citation>
    <scope>NUCLEOTIDE SEQUENCE [LARGE SCALE GENOMIC DNA]</scope>
    <source>
        <strain>Fw109-5</strain>
    </source>
</reference>
<name>RUVC_ANADF</name>
<keyword id="KW-0963">Cytoplasm</keyword>
<keyword id="KW-0227">DNA damage</keyword>
<keyword id="KW-0233">DNA recombination</keyword>
<keyword id="KW-0234">DNA repair</keyword>
<keyword id="KW-0238">DNA-binding</keyword>
<keyword id="KW-0255">Endonuclease</keyword>
<keyword id="KW-0378">Hydrolase</keyword>
<keyword id="KW-0460">Magnesium</keyword>
<keyword id="KW-0479">Metal-binding</keyword>
<keyword id="KW-0540">Nuclease</keyword>
<keyword id="KW-1185">Reference proteome</keyword>
<evidence type="ECO:0000255" key="1">
    <source>
        <dbReference type="HAMAP-Rule" id="MF_00034"/>
    </source>
</evidence>
<comment type="function">
    <text evidence="1">The RuvA-RuvB-RuvC complex processes Holliday junction (HJ) DNA during genetic recombination and DNA repair. Endonuclease that resolves HJ intermediates. Cleaves cruciform DNA by making single-stranded nicks across the HJ at symmetrical positions within the homologous arms, yielding a 5'-phosphate and a 3'-hydroxyl group; requires a central core of homology in the junction. The consensus cleavage sequence is 5'-(A/T)TT(C/G)-3'. Cleavage occurs on the 3'-side of the TT dinucleotide at the point of strand exchange. HJ branch migration catalyzed by RuvA-RuvB allows RuvC to scan DNA until it finds its consensus sequence, where it cleaves and resolves the cruciform DNA.</text>
</comment>
<comment type="catalytic activity">
    <reaction evidence="1">
        <text>Endonucleolytic cleavage at a junction such as a reciprocal single-stranded crossover between two homologous DNA duplexes (Holliday junction).</text>
        <dbReference type="EC" id="3.1.21.10"/>
    </reaction>
</comment>
<comment type="cofactor">
    <cofactor evidence="1">
        <name>Mg(2+)</name>
        <dbReference type="ChEBI" id="CHEBI:18420"/>
    </cofactor>
    <text evidence="1">Binds 2 Mg(2+) ion per subunit.</text>
</comment>
<comment type="subunit">
    <text evidence="1">Homodimer which binds Holliday junction (HJ) DNA. The HJ becomes 2-fold symmetrical on binding to RuvC with unstacked arms; it has a different conformation from HJ DNA in complex with RuvA. In the full resolvosome a probable DNA-RuvA(4)-RuvB(12)-RuvC(2) complex forms which resolves the HJ.</text>
</comment>
<comment type="subcellular location">
    <subcellularLocation>
        <location evidence="1">Cytoplasm</location>
    </subcellularLocation>
</comment>
<comment type="similarity">
    <text evidence="1">Belongs to the RuvC family.</text>
</comment>
<dbReference type="EC" id="3.1.21.10" evidence="1"/>
<dbReference type="EMBL" id="CP000769">
    <property type="protein sequence ID" value="ABS25201.1"/>
    <property type="molecule type" value="Genomic_DNA"/>
</dbReference>
<dbReference type="RefSeq" id="WP_011985307.1">
    <property type="nucleotide sequence ID" value="NC_009675.1"/>
</dbReference>
<dbReference type="SMR" id="A7H905"/>
<dbReference type="STRING" id="404589.Anae109_0992"/>
<dbReference type="KEGG" id="afw:Anae109_0992"/>
<dbReference type="eggNOG" id="COG0817">
    <property type="taxonomic scope" value="Bacteria"/>
</dbReference>
<dbReference type="HOGENOM" id="CLU_091257_2_1_7"/>
<dbReference type="OrthoDB" id="9805499at2"/>
<dbReference type="Proteomes" id="UP000006382">
    <property type="component" value="Chromosome"/>
</dbReference>
<dbReference type="GO" id="GO:0005737">
    <property type="term" value="C:cytoplasm"/>
    <property type="evidence" value="ECO:0007669"/>
    <property type="project" value="UniProtKB-SubCell"/>
</dbReference>
<dbReference type="GO" id="GO:0048476">
    <property type="term" value="C:Holliday junction resolvase complex"/>
    <property type="evidence" value="ECO:0007669"/>
    <property type="project" value="UniProtKB-UniRule"/>
</dbReference>
<dbReference type="GO" id="GO:0008821">
    <property type="term" value="F:crossover junction DNA endonuclease activity"/>
    <property type="evidence" value="ECO:0007669"/>
    <property type="project" value="UniProtKB-UniRule"/>
</dbReference>
<dbReference type="GO" id="GO:0003677">
    <property type="term" value="F:DNA binding"/>
    <property type="evidence" value="ECO:0007669"/>
    <property type="project" value="UniProtKB-KW"/>
</dbReference>
<dbReference type="GO" id="GO:0000287">
    <property type="term" value="F:magnesium ion binding"/>
    <property type="evidence" value="ECO:0007669"/>
    <property type="project" value="UniProtKB-UniRule"/>
</dbReference>
<dbReference type="GO" id="GO:0006310">
    <property type="term" value="P:DNA recombination"/>
    <property type="evidence" value="ECO:0007669"/>
    <property type="project" value="UniProtKB-UniRule"/>
</dbReference>
<dbReference type="GO" id="GO:0006281">
    <property type="term" value="P:DNA repair"/>
    <property type="evidence" value="ECO:0007669"/>
    <property type="project" value="UniProtKB-UniRule"/>
</dbReference>
<dbReference type="CDD" id="cd16962">
    <property type="entry name" value="RuvC"/>
    <property type="match status" value="1"/>
</dbReference>
<dbReference type="FunFam" id="3.30.420.10:FF:000002">
    <property type="entry name" value="Crossover junction endodeoxyribonuclease RuvC"/>
    <property type="match status" value="1"/>
</dbReference>
<dbReference type="Gene3D" id="3.30.420.10">
    <property type="entry name" value="Ribonuclease H-like superfamily/Ribonuclease H"/>
    <property type="match status" value="1"/>
</dbReference>
<dbReference type="HAMAP" id="MF_00034">
    <property type="entry name" value="RuvC"/>
    <property type="match status" value="1"/>
</dbReference>
<dbReference type="InterPro" id="IPR012337">
    <property type="entry name" value="RNaseH-like_sf"/>
</dbReference>
<dbReference type="InterPro" id="IPR036397">
    <property type="entry name" value="RNaseH_sf"/>
</dbReference>
<dbReference type="InterPro" id="IPR002176">
    <property type="entry name" value="X-over_junc_endoDNase_RuvC"/>
</dbReference>
<dbReference type="NCBIfam" id="TIGR00228">
    <property type="entry name" value="ruvC"/>
    <property type="match status" value="1"/>
</dbReference>
<dbReference type="PANTHER" id="PTHR30194">
    <property type="entry name" value="CROSSOVER JUNCTION ENDODEOXYRIBONUCLEASE RUVC"/>
    <property type="match status" value="1"/>
</dbReference>
<dbReference type="PANTHER" id="PTHR30194:SF3">
    <property type="entry name" value="CROSSOVER JUNCTION ENDODEOXYRIBONUCLEASE RUVC"/>
    <property type="match status" value="1"/>
</dbReference>
<dbReference type="Pfam" id="PF02075">
    <property type="entry name" value="RuvC"/>
    <property type="match status" value="1"/>
</dbReference>
<dbReference type="PRINTS" id="PR00696">
    <property type="entry name" value="RSOLVASERUVC"/>
</dbReference>
<dbReference type="SUPFAM" id="SSF53098">
    <property type="entry name" value="Ribonuclease H-like"/>
    <property type="match status" value="1"/>
</dbReference>
<proteinExistence type="inferred from homology"/>
<accession>A7H905</accession>
<feature type="chain" id="PRO_1000071029" description="Crossover junction endodeoxyribonuclease RuvC">
    <location>
        <begin position="1"/>
        <end position="206"/>
    </location>
</feature>
<feature type="active site" evidence="1">
    <location>
        <position position="7"/>
    </location>
</feature>
<feature type="active site" evidence="1">
    <location>
        <position position="67"/>
    </location>
</feature>
<feature type="active site" evidence="1">
    <location>
        <position position="138"/>
    </location>
</feature>
<feature type="binding site" evidence="1">
    <location>
        <position position="7"/>
    </location>
    <ligand>
        <name>Mg(2+)</name>
        <dbReference type="ChEBI" id="CHEBI:18420"/>
        <label>1</label>
    </ligand>
</feature>
<feature type="binding site" evidence="1">
    <location>
        <position position="67"/>
    </location>
    <ligand>
        <name>Mg(2+)</name>
        <dbReference type="ChEBI" id="CHEBI:18420"/>
        <label>2</label>
    </ligand>
</feature>
<feature type="binding site" evidence="1">
    <location>
        <position position="138"/>
    </location>
    <ligand>
        <name>Mg(2+)</name>
        <dbReference type="ChEBI" id="CHEBI:18420"/>
        <label>1</label>
    </ligand>
</feature>
<sequence>MIALGIDPGSRRCGYGVVAREGTRLVVVASGVLAPRAERPVAERLARILDGLAEVIRRAGPAECSIEQVFSGASVRSALVLGQARGVALAAAAQAGLPVFEYAPSEVKLAFTGSGRATKDQMIRTAHMLLGATPGLSDEADALALAVCHLARRAGRLAVPAVRNVAVSVPGVAGRARPLALPPARERAALAAARLRPSRRDHRGLA</sequence>
<protein>
    <recommendedName>
        <fullName evidence="1">Crossover junction endodeoxyribonuclease RuvC</fullName>
        <ecNumber evidence="1">3.1.21.10</ecNumber>
    </recommendedName>
    <alternativeName>
        <fullName evidence="1">Holliday junction nuclease RuvC</fullName>
    </alternativeName>
    <alternativeName>
        <fullName evidence="1">Holliday junction resolvase RuvC</fullName>
    </alternativeName>
</protein>
<gene>
    <name evidence="1" type="primary">ruvC</name>
    <name type="ordered locus">Anae109_0992</name>
</gene>
<organism>
    <name type="scientific">Anaeromyxobacter sp. (strain Fw109-5)</name>
    <dbReference type="NCBI Taxonomy" id="404589"/>
    <lineage>
        <taxon>Bacteria</taxon>
        <taxon>Pseudomonadati</taxon>
        <taxon>Myxococcota</taxon>
        <taxon>Myxococcia</taxon>
        <taxon>Myxococcales</taxon>
        <taxon>Cystobacterineae</taxon>
        <taxon>Anaeromyxobacteraceae</taxon>
        <taxon>Anaeromyxobacter</taxon>
    </lineage>
</organism>